<sequence>MDILTLGWVSVLVLFTWSISMVVWGRNGF</sequence>
<feature type="chain" id="PRO_0000217143" description="Cytochrome b6-f complex subunit 8">
    <location>
        <begin position="1"/>
        <end position="29"/>
    </location>
</feature>
<feature type="transmembrane region" description="Helical" evidence="2">
    <location>
        <begin position="3"/>
        <end position="23"/>
    </location>
</feature>
<feature type="helix" evidence="4">
    <location>
        <begin position="3"/>
        <end position="26"/>
    </location>
</feature>
<protein>
    <recommendedName>
        <fullName>Cytochrome b6-f complex subunit 8</fullName>
    </recommendedName>
    <alternativeName>
        <fullName>Cytochrome b6-f complex subunit PetN</fullName>
    </alternativeName>
    <alternativeName>
        <fullName>Cytochrome b6-f complex subunit VIII</fullName>
    </alternativeName>
</protein>
<organism>
    <name type="scientific">Synechocystis sp. (strain ATCC 27184 / PCC 6803 / Kazusa)</name>
    <dbReference type="NCBI Taxonomy" id="1111708"/>
    <lineage>
        <taxon>Bacteria</taxon>
        <taxon>Bacillati</taxon>
        <taxon>Cyanobacteriota</taxon>
        <taxon>Cyanophyceae</taxon>
        <taxon>Synechococcales</taxon>
        <taxon>Merismopediaceae</taxon>
        <taxon>Synechocystis</taxon>
    </lineage>
</organism>
<reference key="1">
    <citation type="journal article" date="1996" name="DNA Res.">
        <title>Sequence analysis of the genome of the unicellular cyanobacterium Synechocystis sp. strain PCC6803. II. Sequence determination of the entire genome and assignment of potential protein-coding regions.</title>
        <authorList>
            <person name="Kaneko T."/>
            <person name="Sato S."/>
            <person name="Kotani H."/>
            <person name="Tanaka A."/>
            <person name="Asamizu E."/>
            <person name="Nakamura Y."/>
            <person name="Miyajima N."/>
            <person name="Hirosawa M."/>
            <person name="Sugiura M."/>
            <person name="Sasamoto S."/>
            <person name="Kimura T."/>
            <person name="Hosouchi T."/>
            <person name="Matsuno A."/>
            <person name="Muraki A."/>
            <person name="Nakazaki N."/>
            <person name="Naruo K."/>
            <person name="Okumura S."/>
            <person name="Shimpo S."/>
            <person name="Takeuchi C."/>
            <person name="Wada T."/>
            <person name="Watanabe A."/>
            <person name="Yamada M."/>
            <person name="Yasuda M."/>
            <person name="Tabata S."/>
        </authorList>
    </citation>
    <scope>NUCLEOTIDE SEQUENCE [LARGE SCALE GENOMIC DNA]</scope>
    <source>
        <strain>ATCC 27184 / PCC 6803 / Kazusa</strain>
    </source>
</reference>
<name>PETN_SYNY3</name>
<gene>
    <name type="primary">petN</name>
    <name type="ordered locus">sml0004</name>
</gene>
<accession>P72717</accession>
<keyword id="KW-0002">3D-structure</keyword>
<keyword id="KW-0249">Electron transport</keyword>
<keyword id="KW-0472">Membrane</keyword>
<keyword id="KW-0602">Photosynthesis</keyword>
<keyword id="KW-1185">Reference proteome</keyword>
<keyword id="KW-0793">Thylakoid</keyword>
<keyword id="KW-0812">Transmembrane</keyword>
<keyword id="KW-1133">Transmembrane helix</keyword>
<keyword id="KW-0813">Transport</keyword>
<comment type="function">
    <text evidence="1">Component of the cytochrome b6-f complex, which mediates electron transfer between photosystem II (PSII) and photosystem I (PSI), cyclic electron flow around PSI, and state transitions.</text>
</comment>
<comment type="subunit">
    <text evidence="1">The 4 large subunits of the cytochrome b6-f complex are cytochrome b6, subunit IV (17 kDa polypeptide, PetD), cytochrome f and the Rieske protein, while the 4 small subunits are PetG, PetL, PetM and PetN. The complex functions as a dimer (By similarity).</text>
</comment>
<comment type="subcellular location">
    <subcellularLocation>
        <location evidence="1">Cellular thylakoid membrane</location>
        <topology evidence="1">Single-pass membrane protein</topology>
    </subcellularLocation>
</comment>
<comment type="similarity">
    <text evidence="3">Belongs to the PetN family.</text>
</comment>
<dbReference type="EMBL" id="BA000022">
    <property type="protein sequence ID" value="BAA16724.1"/>
    <property type="molecule type" value="Genomic_DNA"/>
</dbReference>
<dbReference type="PIR" id="S74572">
    <property type="entry name" value="S74572"/>
</dbReference>
<dbReference type="PDB" id="7R0W">
    <property type="method" value="EM"/>
    <property type="resolution" value="2.80 A"/>
    <property type="chains" value="H/P=1-29"/>
</dbReference>
<dbReference type="PDB" id="7ZXY">
    <property type="method" value="EM"/>
    <property type="resolution" value="3.15 A"/>
    <property type="chains" value="H/P=1-29"/>
</dbReference>
<dbReference type="PDBsum" id="7R0W"/>
<dbReference type="PDBsum" id="7ZXY"/>
<dbReference type="EMDB" id="EMD-14224"/>
<dbReference type="EMDB" id="EMD-15017"/>
<dbReference type="SMR" id="P72717"/>
<dbReference type="STRING" id="1148.gene:10497579"/>
<dbReference type="PaxDb" id="1148-1651797"/>
<dbReference type="EnsemblBacteria" id="BAA16724">
    <property type="protein sequence ID" value="BAA16724"/>
    <property type="gene ID" value="BAA16724"/>
</dbReference>
<dbReference type="KEGG" id="syn:sml0004"/>
<dbReference type="eggNOG" id="ENOG5033AE4">
    <property type="taxonomic scope" value="Bacteria"/>
</dbReference>
<dbReference type="InParanoid" id="P72717"/>
<dbReference type="BRENDA" id="7.1.1.6">
    <property type="organism ID" value="382"/>
</dbReference>
<dbReference type="Proteomes" id="UP000001425">
    <property type="component" value="Chromosome"/>
</dbReference>
<dbReference type="GO" id="GO:0009512">
    <property type="term" value="C:cytochrome b6f complex"/>
    <property type="evidence" value="ECO:0007669"/>
    <property type="project" value="InterPro"/>
</dbReference>
<dbReference type="GO" id="GO:0031676">
    <property type="term" value="C:plasma membrane-derived thylakoid membrane"/>
    <property type="evidence" value="ECO:0007669"/>
    <property type="project" value="UniProtKB-SubCell"/>
</dbReference>
<dbReference type="GO" id="GO:0045158">
    <property type="term" value="F:electron transporter, transferring electrons within cytochrome b6/f complex of photosystem II activity"/>
    <property type="evidence" value="ECO:0007669"/>
    <property type="project" value="InterPro"/>
</dbReference>
<dbReference type="GO" id="GO:0017004">
    <property type="term" value="P:cytochrome complex assembly"/>
    <property type="evidence" value="ECO:0007669"/>
    <property type="project" value="UniProtKB-UniRule"/>
</dbReference>
<dbReference type="GO" id="GO:0015979">
    <property type="term" value="P:photosynthesis"/>
    <property type="evidence" value="ECO:0007669"/>
    <property type="project" value="UniProtKB-KW"/>
</dbReference>
<dbReference type="HAMAP" id="MF_00395">
    <property type="entry name" value="Cytb6_f_PetN"/>
    <property type="match status" value="1"/>
</dbReference>
<dbReference type="InterPro" id="IPR036143">
    <property type="entry name" value="Cytochr_b6-f_cplx_su8_sf"/>
</dbReference>
<dbReference type="InterPro" id="IPR005497">
    <property type="entry name" value="Cytochrome_b6-f_cplx_su8"/>
</dbReference>
<dbReference type="NCBIfam" id="NF011331">
    <property type="entry name" value="PRK14747.1"/>
    <property type="match status" value="1"/>
</dbReference>
<dbReference type="Pfam" id="PF03742">
    <property type="entry name" value="PetN"/>
    <property type="match status" value="1"/>
</dbReference>
<dbReference type="SUPFAM" id="SSF103451">
    <property type="entry name" value="PetN subunit of the cytochrome b6f complex"/>
    <property type="match status" value="1"/>
</dbReference>
<evidence type="ECO:0000250" key="1"/>
<evidence type="ECO:0000255" key="2"/>
<evidence type="ECO:0000305" key="3"/>
<evidence type="ECO:0007829" key="4">
    <source>
        <dbReference type="PDB" id="7R0W"/>
    </source>
</evidence>
<proteinExistence type="evidence at protein level"/>